<keyword id="KW-0496">Mitochondrion</keyword>
<keyword id="KW-1185">Reference proteome</keyword>
<keyword id="KW-0677">Repeat</keyword>
<keyword id="KW-0809">Transit peptide</keyword>
<reference key="1">
    <citation type="journal article" date="1999" name="Nature">
        <title>Sequence and analysis of chromosome 2 of the plant Arabidopsis thaliana.</title>
        <authorList>
            <person name="Lin X."/>
            <person name="Kaul S."/>
            <person name="Rounsley S.D."/>
            <person name="Shea T.P."/>
            <person name="Benito M.-I."/>
            <person name="Town C.D."/>
            <person name="Fujii C.Y."/>
            <person name="Mason T.M."/>
            <person name="Bowman C.L."/>
            <person name="Barnstead M.E."/>
            <person name="Feldblyum T.V."/>
            <person name="Buell C.R."/>
            <person name="Ketchum K.A."/>
            <person name="Lee J.J."/>
            <person name="Ronning C.M."/>
            <person name="Koo H.L."/>
            <person name="Moffat K.S."/>
            <person name="Cronin L.A."/>
            <person name="Shen M."/>
            <person name="Pai G."/>
            <person name="Van Aken S."/>
            <person name="Umayam L."/>
            <person name="Tallon L.J."/>
            <person name="Gill J.E."/>
            <person name="Adams M.D."/>
            <person name="Carrera A.J."/>
            <person name="Creasy T.H."/>
            <person name="Goodman H.M."/>
            <person name="Somerville C.R."/>
            <person name="Copenhaver G.P."/>
            <person name="Preuss D."/>
            <person name="Nierman W.C."/>
            <person name="White O."/>
            <person name="Eisen J.A."/>
            <person name="Salzberg S.L."/>
            <person name="Fraser C.M."/>
            <person name="Venter J.C."/>
        </authorList>
    </citation>
    <scope>NUCLEOTIDE SEQUENCE [LARGE SCALE GENOMIC DNA]</scope>
    <source>
        <strain>cv. Columbia</strain>
    </source>
</reference>
<reference key="2">
    <citation type="journal article" date="2017" name="Plant J.">
        <title>Araport11: a complete reannotation of the Arabidopsis thaliana reference genome.</title>
        <authorList>
            <person name="Cheng C.Y."/>
            <person name="Krishnakumar V."/>
            <person name="Chan A.P."/>
            <person name="Thibaud-Nissen F."/>
            <person name="Schobel S."/>
            <person name="Town C.D."/>
        </authorList>
    </citation>
    <scope>GENOME REANNOTATION</scope>
    <source>
        <strain>cv. Columbia</strain>
    </source>
</reference>
<reference key="3">
    <citation type="journal article" date="2003" name="Science">
        <title>Empirical analysis of transcriptional activity in the Arabidopsis genome.</title>
        <authorList>
            <person name="Yamada K."/>
            <person name="Lim J."/>
            <person name="Dale J.M."/>
            <person name="Chen H."/>
            <person name="Shinn P."/>
            <person name="Palm C.J."/>
            <person name="Southwick A.M."/>
            <person name="Wu H.C."/>
            <person name="Kim C.J."/>
            <person name="Nguyen M."/>
            <person name="Pham P.K."/>
            <person name="Cheuk R.F."/>
            <person name="Karlin-Newmann G."/>
            <person name="Liu S.X."/>
            <person name="Lam B."/>
            <person name="Sakano H."/>
            <person name="Wu T."/>
            <person name="Yu G."/>
            <person name="Miranda M."/>
            <person name="Quach H.L."/>
            <person name="Tripp M."/>
            <person name="Chang C.H."/>
            <person name="Lee J.M."/>
            <person name="Toriumi M.J."/>
            <person name="Chan M.M."/>
            <person name="Tang C.C."/>
            <person name="Onodera C.S."/>
            <person name="Deng J.M."/>
            <person name="Akiyama K."/>
            <person name="Ansari Y."/>
            <person name="Arakawa T."/>
            <person name="Banh J."/>
            <person name="Banno F."/>
            <person name="Bowser L."/>
            <person name="Brooks S.Y."/>
            <person name="Carninci P."/>
            <person name="Chao Q."/>
            <person name="Choy N."/>
            <person name="Enju A."/>
            <person name="Goldsmith A.D."/>
            <person name="Gurjal M."/>
            <person name="Hansen N.F."/>
            <person name="Hayashizaki Y."/>
            <person name="Johnson-Hopson C."/>
            <person name="Hsuan V.W."/>
            <person name="Iida K."/>
            <person name="Karnes M."/>
            <person name="Khan S."/>
            <person name="Koesema E."/>
            <person name="Ishida J."/>
            <person name="Jiang P.X."/>
            <person name="Jones T."/>
            <person name="Kawai J."/>
            <person name="Kamiya A."/>
            <person name="Meyers C."/>
            <person name="Nakajima M."/>
            <person name="Narusaka M."/>
            <person name="Seki M."/>
            <person name="Sakurai T."/>
            <person name="Satou M."/>
            <person name="Tamse R."/>
            <person name="Vaysberg M."/>
            <person name="Wallender E.K."/>
            <person name="Wong C."/>
            <person name="Yamamura Y."/>
            <person name="Yuan S."/>
            <person name="Shinozaki K."/>
            <person name="Davis R.W."/>
            <person name="Theologis A."/>
            <person name="Ecker J.R."/>
        </authorList>
    </citation>
    <scope>NUCLEOTIDE SEQUENCE [LARGE SCALE MRNA]</scope>
    <source>
        <strain>cv. Columbia</strain>
    </source>
</reference>
<reference key="4">
    <citation type="journal article" date="2000" name="Plant Mol. Biol.">
        <title>In Arabidopsis thaliana, 1% of the genome codes for a novel protein family unique to plants.</title>
        <authorList>
            <person name="Aubourg S."/>
            <person name="Boudet N."/>
            <person name="Kreis M."/>
            <person name="Lecharny A."/>
        </authorList>
    </citation>
    <scope>GENE FAMILY</scope>
</reference>
<reference key="5">
    <citation type="journal article" date="2004" name="Plant Cell">
        <title>Genome-wide analysis of Arabidopsis pentatricopeptide repeat proteins reveals their essential role in organelle biogenesis.</title>
        <authorList>
            <person name="Lurin C."/>
            <person name="Andres C."/>
            <person name="Aubourg S."/>
            <person name="Bellaoui M."/>
            <person name="Bitton F."/>
            <person name="Bruyere C."/>
            <person name="Caboche M."/>
            <person name="Debast C."/>
            <person name="Gualberto J."/>
            <person name="Hoffmann B."/>
            <person name="Lecharny A."/>
            <person name="Le Ret M."/>
            <person name="Martin-Magniette M.-L."/>
            <person name="Mireau H."/>
            <person name="Peeters N."/>
            <person name="Renou J.-P."/>
            <person name="Szurek B."/>
            <person name="Taconnat L."/>
            <person name="Small I."/>
        </authorList>
    </citation>
    <scope>GENE FAMILY</scope>
</reference>
<reference key="6">
    <citation type="journal article" date="2015" name="J. Exp. Bot.">
        <title>Identification of cleavage sites and substrate proteins for two mitochondrial intermediate peptidases in Arabidopsis thaliana.</title>
        <authorList>
            <person name="Carrie C."/>
            <person name="Venne A.S."/>
            <person name="Zahedi R.P."/>
            <person name="Soll J."/>
        </authorList>
    </citation>
    <scope>IDENTIFICATION BY MASS SPECTROMETRY</scope>
    <scope>CLEAVAGE OF TRANSIT PEPTIDE AFTER PHE-49</scope>
</reference>
<gene>
    <name type="primary">PCMP-H66</name>
    <name type="ordered locus">At2g15690</name>
    <name type="ORF">F9O13.24</name>
</gene>
<accession>Q9ZQE5</accession>
<accession>Q94C14</accession>
<protein>
    <recommendedName>
        <fullName>Pentatricopeptide repeat-containing protein At2g15690, mitochondrial</fullName>
    </recommendedName>
</protein>
<sequence>MSSLMAIRCARTQNIVTIGSLLQLRSSFPRLSSQFHFSGTLNSIPIKHLSTSAAANDYHQNPQSGSPSQHQRPYPPQSFDSQNQTNTNQRVPQSPNQWSTQHGGQIPQYGGQNPQHGGQRPPYGGQNPQQGGQMSQYGGHNPQHGGHRPQYGGQRPQYGGPGNNYQNQNVQQSNQSQYYTPQQQQQPQPPRSSNQSPNQMNEVAPPPSVEEVMRLCQRRLYKDAIELLDKGAMPDRECFVLLFESCANLKSLEHSKKVHDHFLQSKFRGDPKLNNMVISMFGECSSITDAKRVFDHMVDKDMDSWHLMMCAYSDNGMGDDALHLFEEMTKHGLKPNEETFLTVFLACATVGGIEEAFLHFDSMKNEHGISPKTEHYLGVLGVLGKCGHLVEAEQYIRDLPFEPTADFWEAMRNYARLHGDIDLEDYMEELMVDVDPSKAVINKIPTPPPKSFKETNMVTSKSRILEFRNLTFYKDEAKEMAAKKGVVYVPDTRFVLHDIDQEAKEQALLYHSERLAIAYGIICTPPRKTLTIIKNLRVCGDCHNFIKIMSKIIGRVLIVRDNKRFHHFKDGKCSCGDYW</sequence>
<organism>
    <name type="scientific">Arabidopsis thaliana</name>
    <name type="common">Mouse-ear cress</name>
    <dbReference type="NCBI Taxonomy" id="3702"/>
    <lineage>
        <taxon>Eukaryota</taxon>
        <taxon>Viridiplantae</taxon>
        <taxon>Streptophyta</taxon>
        <taxon>Embryophyta</taxon>
        <taxon>Tracheophyta</taxon>
        <taxon>Spermatophyta</taxon>
        <taxon>Magnoliopsida</taxon>
        <taxon>eudicotyledons</taxon>
        <taxon>Gunneridae</taxon>
        <taxon>Pentapetalae</taxon>
        <taxon>rosids</taxon>
        <taxon>malvids</taxon>
        <taxon>Brassicales</taxon>
        <taxon>Brassicaceae</taxon>
        <taxon>Camelineae</taxon>
        <taxon>Arabidopsis</taxon>
    </lineage>
</organism>
<name>PP153_ARATH</name>
<comment type="subcellular location">
    <subcellularLocation>
        <location evidence="4">Mitochondrion</location>
    </subcellularLocation>
</comment>
<comment type="similarity">
    <text evidence="3">Belongs to the PPR family. PCMP-H subfamily.</text>
</comment>
<comment type="online information" name="Pentatricopeptide repeat proteins">
    <link uri="https://ppr.plantenergy.uwa.edu.au"/>
</comment>
<dbReference type="EMBL" id="AC006248">
    <property type="protein sequence ID" value="AAD17413.2"/>
    <property type="molecule type" value="Genomic_DNA"/>
</dbReference>
<dbReference type="EMBL" id="CP002685">
    <property type="protein sequence ID" value="AEC06430.1"/>
    <property type="molecule type" value="Genomic_DNA"/>
</dbReference>
<dbReference type="EMBL" id="AY037247">
    <property type="protein sequence ID" value="AAK59848.1"/>
    <property type="molecule type" value="mRNA"/>
</dbReference>
<dbReference type="EMBL" id="BT005808">
    <property type="protein sequence ID" value="AAO64743.1"/>
    <property type="molecule type" value="mRNA"/>
</dbReference>
<dbReference type="PIR" id="B84532">
    <property type="entry name" value="B84532"/>
</dbReference>
<dbReference type="RefSeq" id="NP_565377.1">
    <property type="nucleotide sequence ID" value="NM_127130.2"/>
</dbReference>
<dbReference type="SMR" id="Q9ZQE5"/>
<dbReference type="BioGRID" id="1421">
    <property type="interactions" value="1"/>
</dbReference>
<dbReference type="FunCoup" id="Q9ZQE5">
    <property type="interactions" value="760"/>
</dbReference>
<dbReference type="IntAct" id="Q9ZQE5">
    <property type="interactions" value="1"/>
</dbReference>
<dbReference type="STRING" id="3702.Q9ZQE5"/>
<dbReference type="iPTMnet" id="Q9ZQE5"/>
<dbReference type="SwissPalm" id="Q9ZQE5"/>
<dbReference type="PaxDb" id="3702-AT2G15690.1"/>
<dbReference type="ProteomicsDB" id="249418"/>
<dbReference type="EnsemblPlants" id="AT2G15690.1">
    <property type="protein sequence ID" value="AT2G15690.1"/>
    <property type="gene ID" value="AT2G15690"/>
</dbReference>
<dbReference type="GeneID" id="816062"/>
<dbReference type="Gramene" id="AT2G15690.1">
    <property type="protein sequence ID" value="AT2G15690.1"/>
    <property type="gene ID" value="AT2G15690"/>
</dbReference>
<dbReference type="KEGG" id="ath:AT2G15690"/>
<dbReference type="Araport" id="AT2G15690"/>
<dbReference type="TAIR" id="AT2G15690">
    <property type="gene designation" value="DYW2"/>
</dbReference>
<dbReference type="eggNOG" id="KOG2521">
    <property type="taxonomic scope" value="Eukaryota"/>
</dbReference>
<dbReference type="eggNOG" id="KOG4197">
    <property type="taxonomic scope" value="Eukaryota"/>
</dbReference>
<dbReference type="HOGENOM" id="CLU_002706_45_1_1"/>
<dbReference type="InParanoid" id="Q9ZQE5"/>
<dbReference type="OMA" id="DHMPNRN"/>
<dbReference type="PhylomeDB" id="Q9ZQE5"/>
<dbReference type="PRO" id="PR:Q9ZQE5"/>
<dbReference type="Proteomes" id="UP000006548">
    <property type="component" value="Chromosome 2"/>
</dbReference>
<dbReference type="ExpressionAtlas" id="Q9ZQE5">
    <property type="expression patterns" value="baseline and differential"/>
</dbReference>
<dbReference type="GO" id="GO:0009507">
    <property type="term" value="C:chloroplast"/>
    <property type="evidence" value="ECO:0000314"/>
    <property type="project" value="TAIR"/>
</dbReference>
<dbReference type="GO" id="GO:0005739">
    <property type="term" value="C:mitochondrion"/>
    <property type="evidence" value="ECO:0000314"/>
    <property type="project" value="TAIR"/>
</dbReference>
<dbReference type="GO" id="GO:0003729">
    <property type="term" value="F:mRNA binding"/>
    <property type="evidence" value="ECO:0000314"/>
    <property type="project" value="TAIR"/>
</dbReference>
<dbReference type="GO" id="GO:0008270">
    <property type="term" value="F:zinc ion binding"/>
    <property type="evidence" value="ECO:0007669"/>
    <property type="project" value="InterPro"/>
</dbReference>
<dbReference type="GO" id="GO:0009793">
    <property type="term" value="P:embryo development ending in seed dormancy"/>
    <property type="evidence" value="ECO:0000315"/>
    <property type="project" value="TAIR"/>
</dbReference>
<dbReference type="GO" id="GO:0009451">
    <property type="term" value="P:RNA modification"/>
    <property type="evidence" value="ECO:0007669"/>
    <property type="project" value="InterPro"/>
</dbReference>
<dbReference type="FunFam" id="1.25.40.10:FF:002670">
    <property type="entry name" value="Pentatricopeptide repeat-containing protein At2g15690, mitochondrial"/>
    <property type="match status" value="1"/>
</dbReference>
<dbReference type="Gene3D" id="1.25.40.10">
    <property type="entry name" value="Tetratricopeptide repeat domain"/>
    <property type="match status" value="1"/>
</dbReference>
<dbReference type="InterPro" id="IPR032867">
    <property type="entry name" value="DYW_dom"/>
</dbReference>
<dbReference type="InterPro" id="IPR002885">
    <property type="entry name" value="Pentatricopeptide_rpt"/>
</dbReference>
<dbReference type="InterPro" id="IPR046960">
    <property type="entry name" value="PPR_At4g14850-like_plant"/>
</dbReference>
<dbReference type="InterPro" id="IPR011990">
    <property type="entry name" value="TPR-like_helical_dom_sf"/>
</dbReference>
<dbReference type="NCBIfam" id="TIGR00756">
    <property type="entry name" value="PPR"/>
    <property type="match status" value="1"/>
</dbReference>
<dbReference type="PANTHER" id="PTHR47926:SF353">
    <property type="entry name" value="DYW DOMAIN-CONTAINING PROTEIN"/>
    <property type="match status" value="1"/>
</dbReference>
<dbReference type="PANTHER" id="PTHR47926">
    <property type="entry name" value="PENTATRICOPEPTIDE REPEAT-CONTAINING PROTEIN"/>
    <property type="match status" value="1"/>
</dbReference>
<dbReference type="Pfam" id="PF14432">
    <property type="entry name" value="DYW_deaminase"/>
    <property type="match status" value="1"/>
</dbReference>
<dbReference type="Pfam" id="PF13041">
    <property type="entry name" value="PPR_2"/>
    <property type="match status" value="1"/>
</dbReference>
<dbReference type="PROSITE" id="PS51375">
    <property type="entry name" value="PPR"/>
    <property type="match status" value="4"/>
</dbReference>
<evidence type="ECO:0000256" key="1">
    <source>
        <dbReference type="SAM" id="MobiDB-lite"/>
    </source>
</evidence>
<evidence type="ECO:0000269" key="2">
    <source>
    </source>
</evidence>
<evidence type="ECO:0000305" key="3"/>
<evidence type="ECO:0000305" key="4">
    <source>
    </source>
</evidence>
<feature type="transit peptide" description="Mitochondrion" evidence="2">
    <location>
        <begin position="1"/>
        <end position="49"/>
    </location>
</feature>
<feature type="chain" id="PRO_0000356013" description="Pentatricopeptide repeat-containing protein At2g15690, mitochondrial">
    <location>
        <begin position="50"/>
        <end position="579"/>
    </location>
</feature>
<feature type="repeat" description="PPR 1">
    <location>
        <begin position="235"/>
        <end position="269"/>
    </location>
</feature>
<feature type="repeat" description="PPR 2">
    <location>
        <begin position="270"/>
        <end position="300"/>
    </location>
</feature>
<feature type="repeat" description="PPR 3">
    <location>
        <begin position="301"/>
        <end position="335"/>
    </location>
</feature>
<feature type="repeat" description="PPR 4">
    <location>
        <begin position="336"/>
        <end position="371"/>
    </location>
</feature>
<feature type="repeat" description="PPR 5">
    <location>
        <begin position="372"/>
        <end position="402"/>
    </location>
</feature>
<feature type="region of interest" description="Disordered" evidence="1">
    <location>
        <begin position="56"/>
        <end position="208"/>
    </location>
</feature>
<feature type="region of interest" description="Type DYW motif">
    <location>
        <begin position="485"/>
        <end position="579"/>
    </location>
</feature>
<feature type="compositionally biased region" description="Polar residues" evidence="1">
    <location>
        <begin position="56"/>
        <end position="71"/>
    </location>
</feature>
<feature type="compositionally biased region" description="Polar residues" evidence="1">
    <location>
        <begin position="78"/>
        <end position="103"/>
    </location>
</feature>
<feature type="compositionally biased region" description="Low complexity" evidence="1">
    <location>
        <begin position="117"/>
        <end position="136"/>
    </location>
</feature>
<feature type="compositionally biased region" description="Low complexity" evidence="1">
    <location>
        <begin position="148"/>
        <end position="199"/>
    </location>
</feature>
<proteinExistence type="evidence at protein level"/>